<organism>
    <name type="scientific">Homo sapiens</name>
    <name type="common">Human</name>
    <dbReference type="NCBI Taxonomy" id="9606"/>
    <lineage>
        <taxon>Eukaryota</taxon>
        <taxon>Metazoa</taxon>
        <taxon>Chordata</taxon>
        <taxon>Craniata</taxon>
        <taxon>Vertebrata</taxon>
        <taxon>Euteleostomi</taxon>
        <taxon>Mammalia</taxon>
        <taxon>Eutheria</taxon>
        <taxon>Euarchontoglires</taxon>
        <taxon>Primates</taxon>
        <taxon>Haplorrhini</taxon>
        <taxon>Catarrhini</taxon>
        <taxon>Hominidae</taxon>
        <taxon>Homo</taxon>
    </lineage>
</organism>
<comment type="function">
    <text evidence="3 12 13 15 16">Electroneutral antiporter that translocates urate across the apical membrane of proximal tubular cells in exchange for monovalent organic or inorganic anions (PubMed:12024214, PubMed:22194875, PubMed:35144162, PubMed:35462902). Involved in renal reabsorption of urate and helps maintaining blood levels of uric acid (PubMed:12024214, PubMed:22194875). Mediates urate uptake by an exchange with organic anions such as (S)-lactate and nicotinate, and inorganic anion Cl(-) (PubMed:12024214). Other inorganic anions such as Br(-), I(-) and NO3(-) may also act as counteranions that exchange for urate (PubMed:12024214). Also mediates orotate tubular uptake coupled with nicotinate efflux and to a lesser extent with lactate efflux, therefore displaying a potential role in orotate renal reabsorption (PubMed:21350910). Orotate transport is Cl(-)-dependent (PubMed:21350910).</text>
</comment>
<comment type="catalytic activity">
    <reaction evidence="3">
        <text>urate(out) + (S)-lactate(in) = urate(in) + (S)-lactate(out)</text>
        <dbReference type="Rhea" id="RHEA:72003"/>
        <dbReference type="ChEBI" id="CHEBI:16651"/>
        <dbReference type="ChEBI" id="CHEBI:17775"/>
    </reaction>
</comment>
<comment type="catalytic activity">
    <reaction evidence="3">
        <text>nicotinate(in) + urate(out) = nicotinate(out) + urate(in)</text>
        <dbReference type="Rhea" id="RHEA:72023"/>
        <dbReference type="ChEBI" id="CHEBI:17775"/>
        <dbReference type="ChEBI" id="CHEBI:32544"/>
    </reaction>
</comment>
<comment type="catalytic activity">
    <reaction evidence="3">
        <text>urate(out) + n chloride(in) = urate(in) + n chloride(out)</text>
        <dbReference type="Rhea" id="RHEA:72319"/>
        <dbReference type="ChEBI" id="CHEBI:17775"/>
        <dbReference type="ChEBI" id="CHEBI:17996"/>
    </reaction>
</comment>
<comment type="catalytic activity">
    <reaction evidence="12">
        <text>orotate(out) + nicotinate(in) = orotate(in) + nicotinate(out)</text>
        <dbReference type="Rhea" id="RHEA:72039"/>
        <dbReference type="ChEBI" id="CHEBI:30839"/>
        <dbReference type="ChEBI" id="CHEBI:32544"/>
    </reaction>
</comment>
<comment type="biophysicochemical properties">
    <kinetics>
        <KM evidence="3">371 uM for urate</KM>
        <KM evidence="12">5.2 uM for orotate</KM>
    </kinetics>
</comment>
<comment type="subunit">
    <text evidence="4 6">Interacts with PDZK1.</text>
</comment>
<comment type="subcellular location">
    <subcellularLocation>
        <location evidence="3 13 15 16">Apical cell membrane</location>
        <topology evidence="2">Multi-pass membrane protein</topology>
    </subcellularLocation>
</comment>
<comment type="alternative products">
    <event type="alternative splicing"/>
    <isoform>
        <id>Q96S37-1</id>
        <name>1</name>
        <sequence type="displayed"/>
    </isoform>
    <isoform>
        <id>Q96S37-2</id>
        <name>2</name>
        <sequence type="described" ref="VSP_028879"/>
    </isoform>
    <isoform>
        <id>Q96S37-3</id>
        <name>3</name>
        <sequence type="described" ref="VSP_054054"/>
    </isoform>
    <isoform>
        <id>Q96S37-4</id>
        <name>4</name>
        <sequence type="described" ref="VSP_054055"/>
    </isoform>
</comment>
<comment type="tissue specificity">
    <text evidence="3 6">Detected in kidney (at protein level). Detected in fetal and adult kidney. Detected in epithelial cells of proximal tubules in renal cortex.</text>
</comment>
<comment type="PTM">
    <text evidence="16">N-glycosylated.</text>
</comment>
<comment type="disease" evidence="3 5 7 8 9 11 13 14">
    <disease id="DI-02256">
        <name>Hypouricemia renal 1</name>
        <acronym>RHUC1</acronym>
        <description>A disorder characterized by impaired uric acid reabsorption at the apical membrane of proximal renal tubule cells, and high urinary urate excretion. Patients often appear asymptomatic, but may be subject to exercise-induced acute renal failure, chronic renal dysfunction and nephrolithiasis.</description>
        <dbReference type="MIM" id="220150"/>
    </disease>
    <text>The disease is caused by variants affecting the gene represented in this entry.</text>
</comment>
<comment type="similarity">
    <text evidence="21">Belongs to the major facilitator (TC 2.A.1) superfamily. Organic cation transporter (TC 2.A.1.19) family.</text>
</comment>
<comment type="sequence caution" evidence="21">
    <conflict type="frameshift">
        <sequence resource="EMBL-CDS" id="BAB68364"/>
    </conflict>
</comment>
<protein>
    <recommendedName>
        <fullName evidence="17">Solute carrier family 22 member 12</fullName>
    </recommendedName>
    <alternativeName>
        <fullName evidence="17">Organic anion transporter 4-like protein</fullName>
    </alternativeName>
    <alternativeName>
        <fullName>Renal-specific transporter</fullName>
        <shortName evidence="20">RST</shortName>
    </alternativeName>
    <alternativeName>
        <fullName evidence="17">Urate anion exchanger 1</fullName>
        <shortName evidence="17">URAT1</shortName>
    </alternativeName>
    <alternativeName>
        <fullName evidence="17">Urate:anion antiporter SLC22A12</fullName>
    </alternativeName>
</protein>
<keyword id="KW-0002">3D-structure</keyword>
<keyword id="KW-0025">Alternative splicing</keyword>
<keyword id="KW-1003">Cell membrane</keyword>
<keyword id="KW-0225">Disease variant</keyword>
<keyword id="KW-0325">Glycoprotein</keyword>
<keyword id="KW-0406">Ion transport</keyword>
<keyword id="KW-0472">Membrane</keyword>
<keyword id="KW-0597">Phosphoprotein</keyword>
<keyword id="KW-1267">Proteomics identification</keyword>
<keyword id="KW-1185">Reference proteome</keyword>
<keyword id="KW-0812">Transmembrane</keyword>
<keyword id="KW-1133">Transmembrane helix</keyword>
<keyword id="KW-0813">Transport</keyword>
<feature type="chain" id="PRO_0000307944" description="Solute carrier family 22 member 12">
    <location>
        <begin position="1"/>
        <end position="553"/>
    </location>
</feature>
<feature type="transmembrane region" description="Helical" evidence="2">
    <location>
        <begin position="9"/>
        <end position="29"/>
    </location>
</feature>
<feature type="transmembrane region" description="Helical" evidence="2">
    <location>
        <begin position="146"/>
        <end position="166"/>
    </location>
</feature>
<feature type="transmembrane region" description="Helical" evidence="2">
    <location>
        <begin position="174"/>
        <end position="194"/>
    </location>
</feature>
<feature type="transmembrane region" description="Helical" evidence="2">
    <location>
        <begin position="195"/>
        <end position="215"/>
    </location>
</feature>
<feature type="transmembrane region" description="Helical" evidence="2">
    <location>
        <begin position="232"/>
        <end position="252"/>
    </location>
</feature>
<feature type="transmembrane region" description="Helical" evidence="2">
    <location>
        <begin position="260"/>
        <end position="280"/>
    </location>
</feature>
<feature type="transmembrane region" description="Helical" evidence="2">
    <location>
        <begin position="351"/>
        <end position="371"/>
    </location>
</feature>
<feature type="transmembrane region" description="Helical" evidence="2">
    <location>
        <begin position="378"/>
        <end position="398"/>
    </location>
</feature>
<feature type="transmembrane region" description="Helical" evidence="2">
    <location>
        <begin position="407"/>
        <end position="427"/>
    </location>
</feature>
<feature type="transmembrane region" description="Helical" evidence="2">
    <location>
        <begin position="435"/>
        <end position="455"/>
    </location>
</feature>
<feature type="transmembrane region" description="Helical" evidence="2">
    <location>
        <begin position="466"/>
        <end position="486"/>
    </location>
</feature>
<feature type="transmembrane region" description="Helical" evidence="2">
    <location>
        <begin position="495"/>
        <end position="515"/>
    </location>
</feature>
<feature type="modified residue" description="Phosphothreonine" evidence="1">
    <location>
        <position position="542"/>
    </location>
</feature>
<feature type="glycosylation site" description="N-linked (GlcNAc...) asparagine" evidence="2">
    <location>
        <position position="56"/>
    </location>
</feature>
<feature type="glycosylation site" description="N-linked (GlcNAc...) asparagine" evidence="2">
    <location>
        <position position="102"/>
    </location>
</feature>
<feature type="splice variant" id="VSP_054054" description="In isoform 3." evidence="21">
    <location>
        <begin position="1"/>
        <end position="221"/>
    </location>
</feature>
<feature type="splice variant" id="VSP_028879" description="In isoform 2." evidence="18">
    <location>
        <begin position="170"/>
        <end position="277"/>
    </location>
</feature>
<feature type="splice variant" id="VSP_054055" description="In isoform 4." evidence="19">
    <original>GTAAAFAPAFPVYCLFRFLLAFAVAGVMMNTGTLL</original>
    <variation>V</variation>
    <location>
        <begin position="187"/>
        <end position="221"/>
    </location>
</feature>
<feature type="sequence variant" id="VAR_036720" description="In dbSNP:rs12800450.">
    <original>G</original>
    <variation>W</variation>
    <location>
        <position position="65"/>
    </location>
</feature>
<feature type="sequence variant" id="VAR_084699" description="In RHUC1; uncertain significance; reduced urate transport; decreased localization to cell membrane; dbSNP:rs141570522." evidence="13">
    <original>I</original>
    <variation>T</variation>
    <location>
        <position position="75"/>
    </location>
</feature>
<feature type="sequence variant" id="VAR_036721" description="In RHUC1; strongly reduced urate transport; dbSNP:rs121907896." evidence="5 7 9">
    <original>R</original>
    <variation>H</variation>
    <location>
        <position position="90"/>
    </location>
</feature>
<feature type="sequence variant" id="VAR_036722" description="In dbSNP:rs144328876." evidence="10">
    <original>R</original>
    <variation>C</variation>
    <location>
        <position position="92"/>
    </location>
</feature>
<feature type="sequence variant" id="VAR_036723" description="In RHUC1; strongly reduced urate transport; dbSNP:rs149722479." evidence="5">
    <original>V</original>
    <variation>M</variation>
    <location>
        <position position="138"/>
    </location>
</feature>
<feature type="sequence variant" id="VAR_036724" description="In RHUC1; reduced urate transport; dbSNP:rs201181059." evidence="5">
    <original>G</original>
    <variation>S</variation>
    <location>
        <position position="164"/>
    </location>
</feature>
<feature type="sequence variant" id="VAR_036725" description="In RHUC1; strongly reduced urate transport; dbSNP:rs121907893." evidence="3 5">
    <original>T</original>
    <variation>M</variation>
    <location>
        <position position="217"/>
    </location>
</feature>
<feature type="sequence variant" id="VAR_036726" description="In dbSNP:rs145738825." evidence="7">
    <original>A</original>
    <variation>V</variation>
    <location>
        <position position="226"/>
    </location>
</feature>
<feature type="sequence variant" id="VAR_036727" description="In some gout patients; uncertain significance." evidence="11">
    <original>R</original>
    <variation>G</variation>
    <location>
        <position position="284"/>
    </location>
</feature>
<feature type="sequence variant" id="VAR_036728" description="In some gout patients; uncertain significance; dbSNP:rs2135464592." evidence="11">
    <original>G</original>
    <variation>C</variation>
    <location>
        <position position="290"/>
    </location>
</feature>
<feature type="sequence variant" id="VAR_036729" description="In some gout patients; uncertain significance." evidence="11">
    <original>Q</original>
    <variation>E</variation>
    <location>
        <position position="297"/>
    </location>
</feature>
<feature type="sequence variant" id="VAR_036730" description="In RHUC1; strongly reduced urate transport; dbSNP:rs121907894." evidence="3 11">
    <original>E</original>
    <variation>D</variation>
    <location>
        <position position="298"/>
    </location>
</feature>
<feature type="sequence variant" id="VAR_036731" description="In some gout patients; uncertain significance." evidence="11">
    <original>I</original>
    <variation>S</variation>
    <location>
        <position position="305"/>
    </location>
</feature>
<feature type="sequence variant" id="VAR_036732" description="In dbSNP:rs2039332047." evidence="7">
    <original>Q</original>
    <variation>L</variation>
    <location>
        <position position="312"/>
    </location>
</feature>
<feature type="sequence variant" id="VAR_036733" description="In RHUC1; uncertain significance; affects urate transport." evidence="7">
    <location>
        <begin position="313"/>
        <end position="333"/>
    </location>
</feature>
<feature type="sequence variant" id="VAR_084700" description="In RHUC1; uncertain significance; reduced urate transport; no effect on its localization to cell membrane; dbSNP:rs374858585." evidence="13">
    <original>R</original>
    <variation>S</variation>
    <location>
        <position position="347"/>
    </location>
</feature>
<feature type="sequence variant" id="VAR_075344" description="In RHUC1; reduced urate transport; reduced localization at the plasma membrane; dbSNP:rs1047976958." evidence="14">
    <original>G</original>
    <variation>R</variation>
    <location>
        <position position="366"/>
    </location>
</feature>
<feature type="sequence variant" id="VAR_036734" description="In RHUC1; strongly reduced urate transport; dbSNP:rs765990518." evidence="5 8">
    <original>Q</original>
    <variation>L</variation>
    <location>
        <position position="382"/>
    </location>
</feature>
<feature type="sequence variant" id="VAR_084701" description="In RHUC1; uncertain significance; no effect on urate transport; no effect on its localization to cell membrane; dbSNP:rs146388519." evidence="13">
    <original>V</original>
    <variation>M</variation>
    <location>
        <position position="388"/>
    </location>
</feature>
<feature type="sequence variant" id="VAR_036735" description="In RHUC1; strongly reduced urate transport; dbSNP:rs121907895." evidence="8">
    <original>L</original>
    <variation>R</variation>
    <location>
        <position position="418"/>
    </location>
</feature>
<feature type="sequence variant" id="VAR_036736" description="In RHUC1; reduced urate transport; dbSNP:rs2039413303." evidence="5">
    <original>M</original>
    <variation>T</variation>
    <location>
        <position position="430"/>
    </location>
</feature>
<feature type="sequence variant" id="VAR_084702" description="In RHUC1; uncertain significance; strongly reduced urate transport; abolishes localization to cell membrane; dbSNP:rs145200251." evidence="13">
    <original>R</original>
    <variation>C</variation>
    <location>
        <position position="434"/>
    </location>
</feature>
<feature type="sequence variant" id="VAR_084703" description="In RHUC1; uncertain significance; reduced urate transport; abolishes localization to cell membrane; dbSNP:rs147647315." evidence="13">
    <original>R</original>
    <variation>H</variation>
    <location>
        <position position="434"/>
    </location>
</feature>
<feature type="sequence variant" id="VAR_036737" description="In RHUC1; dbSNP:rs773677616." evidence="7 9 14">
    <original>R</original>
    <variation>H</variation>
    <location>
        <position position="477"/>
    </location>
</feature>
<feature type="sequence conflict" description="In Ref. 3; AAQ88550." evidence="21" ref="3">
    <original>C</original>
    <variation>Y</variation>
    <location>
        <position position="451"/>
    </location>
</feature>
<feature type="sequence conflict" description="In Ref. 5; AK315061." evidence="21" ref="5">
    <original>A</original>
    <variation>T</variation>
    <location>
        <position position="538"/>
    </location>
</feature>
<feature type="helix" evidence="24">
    <location>
        <begin position="4"/>
        <end position="10"/>
    </location>
</feature>
<feature type="strand" evidence="24">
    <location>
        <begin position="12"/>
        <end position="14"/>
    </location>
</feature>
<feature type="helix" evidence="24">
    <location>
        <begin position="15"/>
        <end position="36"/>
    </location>
</feature>
<feature type="helix" evidence="24">
    <location>
        <begin position="38"/>
        <end position="41"/>
    </location>
</feature>
<feature type="strand" evidence="24">
    <location>
        <begin position="47"/>
        <end position="49"/>
    </location>
</feature>
<feature type="helix" evidence="24">
    <location>
        <begin position="52"/>
        <end position="55"/>
    </location>
</feature>
<feature type="helix" evidence="23">
    <location>
        <begin position="57"/>
        <end position="61"/>
    </location>
</feature>
<feature type="helix" evidence="24">
    <location>
        <begin position="69"/>
        <end position="76"/>
    </location>
</feature>
<feature type="strand" evidence="24">
    <location>
        <begin position="83"/>
        <end position="85"/>
    </location>
</feature>
<feature type="strand" evidence="24">
    <location>
        <begin position="87"/>
        <end position="93"/>
    </location>
</feature>
<feature type="helix" evidence="24">
    <location>
        <begin position="96"/>
        <end position="99"/>
    </location>
</feature>
<feature type="strand" evidence="23">
    <location>
        <begin position="100"/>
        <end position="102"/>
    </location>
</feature>
<feature type="helix" evidence="24">
    <location>
        <begin position="105"/>
        <end position="107"/>
    </location>
</feature>
<feature type="helix" evidence="24">
    <location>
        <begin position="110"/>
        <end position="112"/>
    </location>
</feature>
<feature type="strand" evidence="24">
    <location>
        <begin position="113"/>
        <end position="115"/>
    </location>
</feature>
<feature type="strand" evidence="24">
    <location>
        <begin position="120"/>
        <end position="122"/>
    </location>
</feature>
<feature type="turn" evidence="25">
    <location>
        <begin position="124"/>
        <end position="126"/>
    </location>
</feature>
<feature type="helix" evidence="24">
    <location>
        <begin position="131"/>
        <end position="135"/>
    </location>
</feature>
<feature type="helix" evidence="24">
    <location>
        <begin position="139"/>
        <end position="143"/>
    </location>
</feature>
<feature type="helix" evidence="24">
    <location>
        <begin position="144"/>
        <end position="170"/>
    </location>
</feature>
<feature type="helix" evidence="24">
    <location>
        <begin position="172"/>
        <end position="191"/>
    </location>
</feature>
<feature type="helix" evidence="24">
    <location>
        <begin position="196"/>
        <end position="223"/>
    </location>
</feature>
<feature type="turn" evidence="24">
    <location>
        <begin position="227"/>
        <end position="229"/>
    </location>
</feature>
<feature type="helix" evidence="24">
    <location>
        <begin position="230"/>
        <end position="254"/>
    </location>
</feature>
<feature type="helix" evidence="24">
    <location>
        <begin position="258"/>
        <end position="266"/>
    </location>
</feature>
<feature type="helix" evidence="24">
    <location>
        <begin position="268"/>
        <end position="275"/>
    </location>
</feature>
<feature type="helix" evidence="24">
    <location>
        <begin position="276"/>
        <end position="278"/>
    </location>
</feature>
<feature type="helix" evidence="24">
    <location>
        <begin position="283"/>
        <end position="289"/>
    </location>
</feature>
<feature type="helix" evidence="24">
    <location>
        <begin position="292"/>
        <end position="305"/>
    </location>
</feature>
<feature type="helix" evidence="24">
    <location>
        <begin position="309"/>
        <end position="312"/>
    </location>
</feature>
<feature type="helix" evidence="24">
    <location>
        <begin position="317"/>
        <end position="328"/>
    </location>
</feature>
<feature type="helix" evidence="24">
    <location>
        <begin position="329"/>
        <end position="332"/>
    </location>
</feature>
<feature type="helix" evidence="24">
    <location>
        <begin position="337"/>
        <end position="342"/>
    </location>
</feature>
<feature type="helix" evidence="24">
    <location>
        <begin position="346"/>
        <end position="367"/>
    </location>
</feature>
<feature type="helix" evidence="24">
    <location>
        <begin position="371"/>
        <end position="374"/>
    </location>
</feature>
<feature type="helix" evidence="24">
    <location>
        <begin position="378"/>
        <end position="403"/>
    </location>
</feature>
<feature type="helix" evidence="24">
    <location>
        <begin position="405"/>
        <end position="425"/>
    </location>
</feature>
<feature type="strand" evidence="23">
    <location>
        <begin position="428"/>
        <end position="430"/>
    </location>
</feature>
<feature type="helix" evidence="24">
    <location>
        <begin position="431"/>
        <end position="459"/>
    </location>
</feature>
<feature type="helix" evidence="24">
    <location>
        <begin position="462"/>
        <end position="485"/>
    </location>
</feature>
<feature type="helix" evidence="24">
    <location>
        <begin position="486"/>
        <end position="492"/>
    </location>
</feature>
<feature type="helix" evidence="24">
    <location>
        <begin position="495"/>
        <end position="512"/>
    </location>
</feature>
<feature type="strand" evidence="23">
    <location>
        <begin position="519"/>
        <end position="521"/>
    </location>
</feature>
<feature type="helix" evidence="23">
    <location>
        <begin position="527"/>
        <end position="537"/>
    </location>
</feature>
<dbReference type="EMBL" id="AB071863">
    <property type="protein sequence ID" value="BAB96750.1"/>
    <property type="molecule type" value="mRNA"/>
</dbReference>
<dbReference type="EMBL" id="AC044790">
    <property type="protein sequence ID" value="AAK68156.1"/>
    <property type="molecule type" value="Genomic_DNA"/>
</dbReference>
<dbReference type="EMBL" id="AY358183">
    <property type="protein sequence ID" value="AAQ88550.1"/>
    <property type="molecule type" value="mRNA"/>
</dbReference>
<dbReference type="EMBL" id="AB050269">
    <property type="protein sequence ID" value="BAB68364.1"/>
    <property type="status" value="ALT_FRAME"/>
    <property type="molecule type" value="mRNA"/>
</dbReference>
<dbReference type="EMBL" id="AK315061">
    <property type="status" value="NOT_ANNOTATED_CDS"/>
    <property type="molecule type" value="mRNA"/>
</dbReference>
<dbReference type="EMBL" id="AP001092">
    <property type="status" value="NOT_ANNOTATED_CDS"/>
    <property type="molecule type" value="Genomic_DNA"/>
</dbReference>
<dbReference type="EMBL" id="CH471076">
    <property type="protein sequence ID" value="EAW74273.1"/>
    <property type="molecule type" value="Genomic_DNA"/>
</dbReference>
<dbReference type="EMBL" id="CH471076">
    <property type="protein sequence ID" value="EAW74274.1"/>
    <property type="molecule type" value="Genomic_DNA"/>
</dbReference>
<dbReference type="EMBL" id="BC053348">
    <property type="protein sequence ID" value="AAH53348.1"/>
    <property type="molecule type" value="mRNA"/>
</dbReference>
<dbReference type="EMBL" id="DQ514593">
    <property type="protein sequence ID" value="ABF74570.1"/>
    <property type="molecule type" value="Genomic_DNA"/>
</dbReference>
<dbReference type="EMBL" id="DQ514594">
    <property type="protein sequence ID" value="ABF74571.1"/>
    <property type="molecule type" value="Genomic_DNA"/>
</dbReference>
<dbReference type="EMBL" id="DQ514595">
    <property type="protein sequence ID" value="ABF74572.1"/>
    <property type="molecule type" value="Genomic_DNA"/>
</dbReference>
<dbReference type="EMBL" id="DQ514596">
    <property type="protein sequence ID" value="ABF74573.1"/>
    <property type="molecule type" value="Genomic_DNA"/>
</dbReference>
<dbReference type="CCDS" id="CCDS60835.1">
    <molecule id="Q96S37-4"/>
</dbReference>
<dbReference type="CCDS" id="CCDS60836.1">
    <molecule id="Q96S37-2"/>
</dbReference>
<dbReference type="CCDS" id="CCDS8075.1">
    <molecule id="Q96S37-1"/>
</dbReference>
<dbReference type="RefSeq" id="NP_001263255.1">
    <molecule id="Q96S37-4"/>
    <property type="nucleotide sequence ID" value="NM_001276326.2"/>
</dbReference>
<dbReference type="RefSeq" id="NP_001263256.1">
    <molecule id="Q96S37-2"/>
    <property type="nucleotide sequence ID" value="NM_001276327.2"/>
</dbReference>
<dbReference type="RefSeq" id="NP_653186.2">
    <molecule id="Q96S37-1"/>
    <property type="nucleotide sequence ID" value="NM_144585.3"/>
</dbReference>
<dbReference type="RefSeq" id="NP_700357.1">
    <molecule id="Q96S37-3"/>
    <property type="nucleotide sequence ID" value="NM_153378.3"/>
</dbReference>
<dbReference type="PDB" id="8WJG">
    <property type="method" value="EM"/>
    <property type="resolution" value="3.00 A"/>
    <property type="chains" value="A=1-538"/>
</dbReference>
<dbReference type="PDB" id="8WJQ">
    <property type="method" value="EM"/>
    <property type="resolution" value="3.80 A"/>
    <property type="chains" value="A=1-538"/>
</dbReference>
<dbReference type="PDB" id="9B1F">
    <property type="method" value="EM"/>
    <property type="resolution" value="2.90 A"/>
    <property type="chains" value="A=3-553"/>
</dbReference>
<dbReference type="PDB" id="9B1G">
    <property type="method" value="EM"/>
    <property type="resolution" value="2.70 A"/>
    <property type="chains" value="A=3-553"/>
</dbReference>
<dbReference type="PDB" id="9B1H">
    <property type="method" value="EM"/>
    <property type="resolution" value="2.90 A"/>
    <property type="chains" value="A=3-553"/>
</dbReference>
<dbReference type="PDB" id="9B1I">
    <property type="method" value="EM"/>
    <property type="resolution" value="3.70 A"/>
    <property type="chains" value="A=3-553"/>
</dbReference>
<dbReference type="PDB" id="9B1J">
    <property type="method" value="EM"/>
    <property type="resolution" value="3.00 A"/>
    <property type="chains" value="A=3-553"/>
</dbReference>
<dbReference type="PDB" id="9B1K">
    <property type="method" value="EM"/>
    <property type="resolution" value="3.30 A"/>
    <property type="chains" value="A=3-553"/>
</dbReference>
<dbReference type="PDB" id="9B1L">
    <property type="method" value="EM"/>
    <property type="resolution" value="3.10 A"/>
    <property type="chains" value="A=3-553"/>
</dbReference>
<dbReference type="PDB" id="9B1M">
    <property type="method" value="EM"/>
    <property type="resolution" value="3.00 A"/>
    <property type="chains" value="A=3-553"/>
</dbReference>
<dbReference type="PDB" id="9B1N">
    <property type="method" value="EM"/>
    <property type="resolution" value="3.10 A"/>
    <property type="chains" value="A=3-553"/>
</dbReference>
<dbReference type="PDB" id="9B1O">
    <property type="method" value="EM"/>
    <property type="resolution" value="3.10 A"/>
    <property type="chains" value="A=3-553"/>
</dbReference>
<dbReference type="PDB" id="9IRW">
    <property type="method" value="EM"/>
    <property type="resolution" value="3.26 A"/>
    <property type="chains" value="A=1-553"/>
</dbReference>
<dbReference type="PDB" id="9IRX">
    <property type="method" value="EM"/>
    <property type="resolution" value="3.00 A"/>
    <property type="chains" value="A=1-553"/>
</dbReference>
<dbReference type="PDB" id="9IRY">
    <property type="method" value="EM"/>
    <property type="resolution" value="3.20 A"/>
    <property type="chains" value="A=1-553"/>
</dbReference>
<dbReference type="PDB" id="9JDV">
    <property type="method" value="EM"/>
    <property type="resolution" value="3.32 A"/>
    <property type="chains" value="A=1-553"/>
</dbReference>
<dbReference type="PDB" id="9JDY">
    <property type="method" value="EM"/>
    <property type="resolution" value="3.23 A"/>
    <property type="chains" value="A=1-553"/>
</dbReference>
<dbReference type="PDB" id="9JDZ">
    <property type="method" value="EM"/>
    <property type="resolution" value="3.50 A"/>
    <property type="chains" value="A=1-553"/>
</dbReference>
<dbReference type="PDB" id="9JE0">
    <property type="method" value="EM"/>
    <property type="resolution" value="3.23 A"/>
    <property type="chains" value="A=1-553"/>
</dbReference>
<dbReference type="PDB" id="9JE1">
    <property type="method" value="EM"/>
    <property type="resolution" value="3.60 A"/>
    <property type="chains" value="A=1-553"/>
</dbReference>
<dbReference type="PDBsum" id="8WJG"/>
<dbReference type="PDBsum" id="8WJQ"/>
<dbReference type="PDBsum" id="9B1F"/>
<dbReference type="PDBsum" id="9B1G"/>
<dbReference type="PDBsum" id="9B1H"/>
<dbReference type="PDBsum" id="9B1I"/>
<dbReference type="PDBsum" id="9B1J"/>
<dbReference type="PDBsum" id="9B1K"/>
<dbReference type="PDBsum" id="9B1L"/>
<dbReference type="PDBsum" id="9B1M"/>
<dbReference type="PDBsum" id="9B1N"/>
<dbReference type="PDBsum" id="9B1O"/>
<dbReference type="PDBsum" id="9IRW"/>
<dbReference type="PDBsum" id="9IRX"/>
<dbReference type="PDBsum" id="9IRY"/>
<dbReference type="PDBsum" id="9JDV"/>
<dbReference type="PDBsum" id="9JDY"/>
<dbReference type="PDBsum" id="9JDZ"/>
<dbReference type="PDBsum" id="9JE0"/>
<dbReference type="PDBsum" id="9JE1"/>
<dbReference type="EMDB" id="EMD-37579"/>
<dbReference type="EMDB" id="EMD-37589"/>
<dbReference type="EMDB" id="EMD-44077"/>
<dbReference type="EMDB" id="EMD-44078"/>
<dbReference type="EMDB" id="EMD-44079"/>
<dbReference type="EMDB" id="EMD-44080"/>
<dbReference type="EMDB" id="EMD-44081"/>
<dbReference type="EMDB" id="EMD-44082"/>
<dbReference type="EMDB" id="EMD-44083"/>
<dbReference type="EMDB" id="EMD-44084"/>
<dbReference type="EMDB" id="EMD-44085"/>
<dbReference type="EMDB" id="EMD-44086"/>
<dbReference type="EMDB" id="EMD-60823"/>
<dbReference type="EMDB" id="EMD-60824"/>
<dbReference type="EMDB" id="EMD-60825"/>
<dbReference type="EMDB" id="EMD-61399"/>
<dbReference type="EMDB" id="EMD-61401"/>
<dbReference type="EMDB" id="EMD-61402"/>
<dbReference type="EMDB" id="EMD-61403"/>
<dbReference type="EMDB" id="EMD-61404"/>
<dbReference type="SMR" id="Q96S37"/>
<dbReference type="BioGRID" id="125471">
    <property type="interactions" value="19"/>
</dbReference>
<dbReference type="CORUM" id="Q96S37"/>
<dbReference type="FunCoup" id="Q96S37">
    <property type="interactions" value="62"/>
</dbReference>
<dbReference type="IntAct" id="Q96S37">
    <property type="interactions" value="4"/>
</dbReference>
<dbReference type="MINT" id="Q96S37"/>
<dbReference type="STRING" id="9606.ENSP00000366797"/>
<dbReference type="BindingDB" id="Q96S37"/>
<dbReference type="ChEMBL" id="CHEMBL6120"/>
<dbReference type="DrugBank" id="DB12319">
    <property type="generic name" value="Benzbromarone"/>
</dbReference>
<dbReference type="DrugBank" id="DB16145">
    <property type="generic name" value="Dotinurad"/>
</dbReference>
<dbReference type="DrugBank" id="DB12466">
    <property type="generic name" value="Favipiravir"/>
</dbReference>
<dbReference type="DrugBank" id="DB11560">
    <property type="generic name" value="Lesinurad"/>
</dbReference>
<dbReference type="DrugBank" id="DB00678">
    <property type="generic name" value="Losartan"/>
</dbReference>
<dbReference type="DrugBank" id="DB16770">
    <property type="generic name" value="Morin"/>
</dbReference>
<dbReference type="DrugBank" id="DB14856">
    <property type="generic name" value="PF-05089771"/>
</dbReference>
<dbReference type="DrugBank" id="DB01032">
    <property type="generic name" value="Probenecid"/>
</dbReference>
<dbReference type="DrugBank" id="DB19209">
    <property type="generic name" value="Ruzinurad"/>
</dbReference>
<dbReference type="DrugBank" id="DB01138">
    <property type="generic name" value="Sulfinpyrazone"/>
</dbReference>
<dbReference type="DrugBank" id="DB00870">
    <property type="generic name" value="Suprofen"/>
</dbReference>
<dbReference type="DrugBank" id="DB11873">
    <property type="generic name" value="Verinurad"/>
</dbReference>
<dbReference type="DrugCentral" id="Q96S37"/>
<dbReference type="GuidetoPHARMACOLOGY" id="1031"/>
<dbReference type="TCDB" id="2.A.1.19.11">
    <property type="family name" value="the major facilitator superfamily (mfs)"/>
</dbReference>
<dbReference type="GlyCosmos" id="Q96S37">
    <property type="glycosylation" value="2 sites, No reported glycans"/>
</dbReference>
<dbReference type="GlyGen" id="Q96S37">
    <property type="glycosylation" value="4 sites, 1 O-linked glycan (2 sites)"/>
</dbReference>
<dbReference type="iPTMnet" id="Q96S37"/>
<dbReference type="PhosphoSitePlus" id="Q96S37"/>
<dbReference type="BioMuta" id="SLC22A12"/>
<dbReference type="DMDM" id="74732700"/>
<dbReference type="MassIVE" id="Q96S37"/>
<dbReference type="PaxDb" id="9606-ENSP00000366797"/>
<dbReference type="PeptideAtlas" id="Q96S37"/>
<dbReference type="ProteomicsDB" id="33799"/>
<dbReference type="ProteomicsDB" id="78060">
    <molecule id="Q96S37-1"/>
</dbReference>
<dbReference type="ProteomicsDB" id="78061">
    <molecule id="Q96S37-2"/>
</dbReference>
<dbReference type="Antibodypedia" id="15487">
    <property type="antibodies" value="142 antibodies from 24 providers"/>
</dbReference>
<dbReference type="DNASU" id="116085"/>
<dbReference type="Ensembl" id="ENST00000336464.7">
    <molecule id="Q96S37-4"/>
    <property type="protein sequence ID" value="ENSP00000336836.7"/>
    <property type="gene ID" value="ENSG00000197891.12"/>
</dbReference>
<dbReference type="Ensembl" id="ENST00000377567.6">
    <molecule id="Q96S37-2"/>
    <property type="protein sequence ID" value="ENSP00000366790.2"/>
    <property type="gene ID" value="ENSG00000197891.12"/>
</dbReference>
<dbReference type="Ensembl" id="ENST00000377572.5">
    <molecule id="Q96S37-2"/>
    <property type="protein sequence ID" value="ENSP00000366795.1"/>
    <property type="gene ID" value="ENSG00000197891.12"/>
</dbReference>
<dbReference type="Ensembl" id="ENST00000377574.6">
    <molecule id="Q96S37-1"/>
    <property type="protein sequence ID" value="ENSP00000366797.1"/>
    <property type="gene ID" value="ENSG00000197891.12"/>
</dbReference>
<dbReference type="Ensembl" id="ENST00000473690.5">
    <molecule id="Q96S37-3"/>
    <property type="protein sequence ID" value="ENSP00000438437.1"/>
    <property type="gene ID" value="ENSG00000197891.12"/>
</dbReference>
<dbReference type="GeneID" id="116085"/>
<dbReference type="KEGG" id="hsa:116085"/>
<dbReference type="MANE-Select" id="ENST00000377574.6">
    <property type="protein sequence ID" value="ENSP00000366797.1"/>
    <property type="RefSeq nucleotide sequence ID" value="NM_144585.4"/>
    <property type="RefSeq protein sequence ID" value="NP_653186.2"/>
</dbReference>
<dbReference type="UCSC" id="uc001oal.3">
    <molecule id="Q96S37-1"/>
    <property type="organism name" value="human"/>
</dbReference>
<dbReference type="AGR" id="HGNC:17989"/>
<dbReference type="CTD" id="116085"/>
<dbReference type="DisGeNET" id="116085"/>
<dbReference type="GeneCards" id="SLC22A12"/>
<dbReference type="HGNC" id="HGNC:17989">
    <property type="gene designation" value="SLC22A12"/>
</dbReference>
<dbReference type="HPA" id="ENSG00000197891">
    <property type="expression patterns" value="Tissue enriched (kidney)"/>
</dbReference>
<dbReference type="MalaCards" id="SLC22A12"/>
<dbReference type="MIM" id="220150">
    <property type="type" value="phenotype"/>
</dbReference>
<dbReference type="MIM" id="607096">
    <property type="type" value="gene"/>
</dbReference>
<dbReference type="neXtProt" id="NX_Q96S37"/>
<dbReference type="OpenTargets" id="ENSG00000197891"/>
<dbReference type="Orphanet" id="94088">
    <property type="disease" value="Hereditary renal hypouricemia"/>
</dbReference>
<dbReference type="PharmGKB" id="PA38478"/>
<dbReference type="VEuPathDB" id="HostDB:ENSG00000197891"/>
<dbReference type="eggNOG" id="KOG0255">
    <property type="taxonomic scope" value="Eukaryota"/>
</dbReference>
<dbReference type="GeneTree" id="ENSGT00940000162485"/>
<dbReference type="HOGENOM" id="CLU_001265_33_3_1"/>
<dbReference type="InParanoid" id="Q96S37"/>
<dbReference type="OMA" id="LTWNYLQ"/>
<dbReference type="OrthoDB" id="2544694at2759"/>
<dbReference type="PAN-GO" id="Q96S37">
    <property type="GO annotations" value="1 GO annotation based on evolutionary models"/>
</dbReference>
<dbReference type="PhylomeDB" id="Q96S37"/>
<dbReference type="TreeFam" id="TF315847"/>
<dbReference type="PathwayCommons" id="Q96S37"/>
<dbReference type="Reactome" id="R-HSA-561048">
    <property type="pathway name" value="Organic anion transport"/>
</dbReference>
<dbReference type="Reactome" id="R-HSA-5619071">
    <property type="pathway name" value="Defective SLC22A12 causes renal hypouricemia 1 (RHUC1)"/>
</dbReference>
<dbReference type="SignaLink" id="Q96S37"/>
<dbReference type="BioGRID-ORCS" id="116085">
    <property type="hits" value="16 hits in 1152 CRISPR screens"/>
</dbReference>
<dbReference type="ChiTaRS" id="SLC22A12">
    <property type="organism name" value="human"/>
</dbReference>
<dbReference type="GeneWiki" id="SLC22A12"/>
<dbReference type="GenomeRNAi" id="116085"/>
<dbReference type="Pharos" id="Q96S37">
    <property type="development level" value="Tclin"/>
</dbReference>
<dbReference type="PRO" id="PR:Q96S37"/>
<dbReference type="Proteomes" id="UP000005640">
    <property type="component" value="Chromosome 11"/>
</dbReference>
<dbReference type="RNAct" id="Q96S37">
    <property type="molecule type" value="protein"/>
</dbReference>
<dbReference type="Bgee" id="ENSG00000197891">
    <property type="expression patterns" value="Expressed in kidney epithelium and 28 other cell types or tissues"/>
</dbReference>
<dbReference type="GO" id="GO:0016324">
    <property type="term" value="C:apical plasma membrane"/>
    <property type="evidence" value="ECO:0000314"/>
    <property type="project" value="UniProtKB"/>
</dbReference>
<dbReference type="GO" id="GO:0031526">
    <property type="term" value="C:brush border membrane"/>
    <property type="evidence" value="ECO:0000250"/>
    <property type="project" value="UniProtKB"/>
</dbReference>
<dbReference type="GO" id="GO:0070062">
    <property type="term" value="C:extracellular exosome"/>
    <property type="evidence" value="ECO:0007005"/>
    <property type="project" value="UniProtKB"/>
</dbReference>
<dbReference type="GO" id="GO:0016020">
    <property type="term" value="C:membrane"/>
    <property type="evidence" value="ECO:0000314"/>
    <property type="project" value="UniProtKB"/>
</dbReference>
<dbReference type="GO" id="GO:0005886">
    <property type="term" value="C:plasma membrane"/>
    <property type="evidence" value="ECO:0000314"/>
    <property type="project" value="UniProtKB"/>
</dbReference>
<dbReference type="GO" id="GO:0030165">
    <property type="term" value="F:PDZ domain binding"/>
    <property type="evidence" value="ECO:0000353"/>
    <property type="project" value="UniProtKB"/>
</dbReference>
<dbReference type="GO" id="GO:0015143">
    <property type="term" value="F:urate transmembrane transporter activity"/>
    <property type="evidence" value="ECO:0000314"/>
    <property type="project" value="UniProtKB"/>
</dbReference>
<dbReference type="GO" id="GO:0019725">
    <property type="term" value="P:cellular homeostasis"/>
    <property type="evidence" value="ECO:0000303"/>
    <property type="project" value="UniProtKB"/>
</dbReference>
<dbReference type="GO" id="GO:0032869">
    <property type="term" value="P:cellular response to insulin stimulus"/>
    <property type="evidence" value="ECO:0007669"/>
    <property type="project" value="Ensembl"/>
</dbReference>
<dbReference type="GO" id="GO:0006811">
    <property type="term" value="P:monoatomic ion transport"/>
    <property type="evidence" value="ECO:0007669"/>
    <property type="project" value="UniProtKB-KW"/>
</dbReference>
<dbReference type="GO" id="GO:0015711">
    <property type="term" value="P:organic anion transport"/>
    <property type="evidence" value="ECO:0000318"/>
    <property type="project" value="GO_Central"/>
</dbReference>
<dbReference type="GO" id="GO:0097744">
    <property type="term" value="P:renal urate salt excretion"/>
    <property type="evidence" value="ECO:0007669"/>
    <property type="project" value="Ensembl"/>
</dbReference>
<dbReference type="GO" id="GO:0009410">
    <property type="term" value="P:response to xenobiotic stimulus"/>
    <property type="evidence" value="ECO:0000314"/>
    <property type="project" value="UniProtKB"/>
</dbReference>
<dbReference type="GO" id="GO:0046415">
    <property type="term" value="P:urate metabolic process"/>
    <property type="evidence" value="ECO:0000315"/>
    <property type="project" value="BHF-UCL"/>
</dbReference>
<dbReference type="GO" id="GO:0015747">
    <property type="term" value="P:urate transport"/>
    <property type="evidence" value="ECO:0000314"/>
    <property type="project" value="UniProtKB"/>
</dbReference>
<dbReference type="CDD" id="cd17374">
    <property type="entry name" value="MFS_OAT"/>
    <property type="match status" value="1"/>
</dbReference>
<dbReference type="FunFam" id="1.20.1250.20:FF:000023">
    <property type="entry name" value="Solute carrier family 22 member 6"/>
    <property type="match status" value="1"/>
</dbReference>
<dbReference type="Gene3D" id="1.20.1250.20">
    <property type="entry name" value="MFS general substrate transporter like domains"/>
    <property type="match status" value="1"/>
</dbReference>
<dbReference type="InterPro" id="IPR011701">
    <property type="entry name" value="MFS"/>
</dbReference>
<dbReference type="InterPro" id="IPR020846">
    <property type="entry name" value="MFS_dom"/>
</dbReference>
<dbReference type="InterPro" id="IPR036259">
    <property type="entry name" value="MFS_trans_sf"/>
</dbReference>
<dbReference type="PANTHER" id="PTHR24064">
    <property type="entry name" value="SOLUTE CARRIER FAMILY 22 MEMBER"/>
    <property type="match status" value="1"/>
</dbReference>
<dbReference type="Pfam" id="PF07690">
    <property type="entry name" value="MFS_1"/>
    <property type="match status" value="1"/>
</dbReference>
<dbReference type="SUPFAM" id="SSF103473">
    <property type="entry name" value="MFS general substrate transporter"/>
    <property type="match status" value="1"/>
</dbReference>
<dbReference type="PROSITE" id="PS50850">
    <property type="entry name" value="MFS"/>
    <property type="match status" value="1"/>
</dbReference>
<accession>Q96S37</accession>
<accession>B7WPG1</accession>
<accession>G3XAN7</accession>
<accession>Q19PF7</accession>
<accession>Q19PF8</accession>
<accession>Q19PF9</accession>
<accession>Q19PG0</accession>
<accession>Q6UXW3</accession>
<accession>Q96DT2</accession>
<proteinExistence type="evidence at protein level"/>
<evidence type="ECO:0000250" key="1">
    <source>
        <dbReference type="UniProtKB" id="Q8CFZ5"/>
    </source>
</evidence>
<evidence type="ECO:0000255" key="2"/>
<evidence type="ECO:0000269" key="3">
    <source>
    </source>
</evidence>
<evidence type="ECO:0000269" key="4">
    <source>
    </source>
</evidence>
<evidence type="ECO:0000269" key="5">
    <source>
    </source>
</evidence>
<evidence type="ECO:0000269" key="6">
    <source>
    </source>
</evidence>
<evidence type="ECO:0000269" key="7">
    <source>
    </source>
</evidence>
<evidence type="ECO:0000269" key="8">
    <source>
    </source>
</evidence>
<evidence type="ECO:0000269" key="9">
    <source>
    </source>
</evidence>
<evidence type="ECO:0000269" key="10">
    <source>
    </source>
</evidence>
<evidence type="ECO:0000269" key="11">
    <source>
    </source>
</evidence>
<evidence type="ECO:0000269" key="12">
    <source>
    </source>
</evidence>
<evidence type="ECO:0000269" key="13">
    <source>
    </source>
</evidence>
<evidence type="ECO:0000269" key="14">
    <source>
    </source>
</evidence>
<evidence type="ECO:0000269" key="15">
    <source>
    </source>
</evidence>
<evidence type="ECO:0000269" key="16">
    <source>
    </source>
</evidence>
<evidence type="ECO:0000303" key="17">
    <source>
    </source>
</evidence>
<evidence type="ECO:0000303" key="18">
    <source>
    </source>
</evidence>
<evidence type="ECO:0000303" key="19">
    <source>
    </source>
</evidence>
<evidence type="ECO:0000303" key="20">
    <source ref="2"/>
</evidence>
<evidence type="ECO:0000305" key="21"/>
<evidence type="ECO:0000312" key="22">
    <source>
        <dbReference type="HGNC" id="HGNC:17989"/>
    </source>
</evidence>
<evidence type="ECO:0007829" key="23">
    <source>
        <dbReference type="PDB" id="8WJG"/>
    </source>
</evidence>
<evidence type="ECO:0007829" key="24">
    <source>
        <dbReference type="PDB" id="9B1F"/>
    </source>
</evidence>
<evidence type="ECO:0007829" key="25">
    <source>
        <dbReference type="PDB" id="9JE0"/>
    </source>
</evidence>
<name>S22AC_HUMAN</name>
<reference key="1">
    <citation type="journal article" date="2002" name="Nature">
        <title>Molecular identification of a renal urate anion exchanger that regulates blood urate levels.</title>
        <authorList>
            <person name="Enomoto A."/>
            <person name="Kimura H."/>
            <person name="Chairoungdua A."/>
            <person name="Shigeta Y."/>
            <person name="Jutabha P."/>
            <person name="Cha S.H."/>
            <person name="Hosoyamada M."/>
            <person name="Takeda M."/>
            <person name="Sekine T."/>
            <person name="Igarashi T."/>
            <person name="Matsuo H."/>
            <person name="Kikuchi Y."/>
            <person name="Oda T."/>
            <person name="Ichida K."/>
            <person name="Hosoya T."/>
            <person name="Shimokata K."/>
            <person name="Niwa T."/>
            <person name="Kanai Y."/>
            <person name="Endou H."/>
        </authorList>
    </citation>
    <scope>NUCLEOTIDE SEQUENCE [MRNA] (ISOFORM 1)</scope>
    <scope>FUNCTION</scope>
    <scope>TRANSPORTER ACTIVITY</scope>
    <scope>BIOPHYSICOCHEMICAL PROPERTIES</scope>
    <scope>TISSUE SPECIFICITY</scope>
    <scope>SUBCELLULAR LOCATION</scope>
    <scope>VARIANTS RHUC1 MET-217 AND ASP-298</scope>
    <scope>CHARACTERIZATION OF VARIANTS RHUC1 MET-217 AND ASP-298</scope>
    <source>
        <tissue>Kidney</tissue>
    </source>
</reference>
<reference key="2">
    <citation type="submission" date="2001-06" db="EMBL/GenBank/DDBJ databases">
        <title>Sequencing of human RST gene.</title>
        <authorList>
            <person name="Rowen L."/>
            <person name="Madan A."/>
            <person name="Qin S."/>
            <person name="Baradarani L."/>
            <person name="Birditt B."/>
            <person name="Bloom S."/>
            <person name="Burke J."/>
            <person name="Dors M."/>
            <person name="Fleetwood P."/>
            <person name="Kaur A."/>
            <person name="Madan A."/>
            <person name="Nesbitt R."/>
            <person name="Pate D."/>
            <person name="Hood L."/>
        </authorList>
    </citation>
    <scope>NUCLEOTIDE SEQUENCE [GENOMIC DNA]</scope>
</reference>
<reference key="3">
    <citation type="journal article" date="2003" name="Genome Res.">
        <title>The secreted protein discovery initiative (SPDI), a large-scale effort to identify novel human secreted and transmembrane proteins: a bioinformatics assessment.</title>
        <authorList>
            <person name="Clark H.F."/>
            <person name="Gurney A.L."/>
            <person name="Abaya E."/>
            <person name="Baker K."/>
            <person name="Baldwin D.T."/>
            <person name="Brush J."/>
            <person name="Chen J."/>
            <person name="Chow B."/>
            <person name="Chui C."/>
            <person name="Crowley C."/>
            <person name="Currell B."/>
            <person name="Deuel B."/>
            <person name="Dowd P."/>
            <person name="Eaton D."/>
            <person name="Foster J.S."/>
            <person name="Grimaldi C."/>
            <person name="Gu Q."/>
            <person name="Hass P.E."/>
            <person name="Heldens S."/>
            <person name="Huang A."/>
            <person name="Kim H.S."/>
            <person name="Klimowski L."/>
            <person name="Jin Y."/>
            <person name="Johnson S."/>
            <person name="Lee J."/>
            <person name="Lewis L."/>
            <person name="Liao D."/>
            <person name="Mark M.R."/>
            <person name="Robbie E."/>
            <person name="Sanchez C."/>
            <person name="Schoenfeld J."/>
            <person name="Seshagiri S."/>
            <person name="Simmons L."/>
            <person name="Singh J."/>
            <person name="Smith V."/>
            <person name="Stinson J."/>
            <person name="Vagts A."/>
            <person name="Vandlen R.L."/>
            <person name="Watanabe C."/>
            <person name="Wieand D."/>
            <person name="Woods K."/>
            <person name="Xie M.-H."/>
            <person name="Yansura D.G."/>
            <person name="Yi S."/>
            <person name="Yu G."/>
            <person name="Yuan J."/>
            <person name="Zhang M."/>
            <person name="Zhang Z."/>
            <person name="Goddard A.D."/>
            <person name="Wood W.I."/>
            <person name="Godowski P.J."/>
            <person name="Gray A.M."/>
        </authorList>
    </citation>
    <scope>NUCLEOTIDE SEQUENCE [LARGE SCALE MRNA] (ISOFORM 2)</scope>
</reference>
<reference key="4">
    <citation type="submission" date="2000-10" db="EMBL/GenBank/DDBJ databases">
        <title>Human organic anion transporter 4 similar gene.</title>
        <authorList>
            <person name="Koyama K."/>
        </authorList>
    </citation>
    <scope>NUCLEOTIDE SEQUENCE [LARGE SCALE MRNA] (ISOFORM 1)</scope>
    <source>
        <tissue>Kidney</tissue>
    </source>
</reference>
<reference key="5">
    <citation type="journal article" date="2004" name="Nat. Genet.">
        <title>Complete sequencing and characterization of 21,243 full-length human cDNAs.</title>
        <authorList>
            <person name="Ota T."/>
            <person name="Suzuki Y."/>
            <person name="Nishikawa T."/>
            <person name="Otsuki T."/>
            <person name="Sugiyama T."/>
            <person name="Irie R."/>
            <person name="Wakamatsu A."/>
            <person name="Hayashi K."/>
            <person name="Sato H."/>
            <person name="Nagai K."/>
            <person name="Kimura K."/>
            <person name="Makita H."/>
            <person name="Sekine M."/>
            <person name="Obayashi M."/>
            <person name="Nishi T."/>
            <person name="Shibahara T."/>
            <person name="Tanaka T."/>
            <person name="Ishii S."/>
            <person name="Yamamoto J."/>
            <person name="Saito K."/>
            <person name="Kawai Y."/>
            <person name="Isono Y."/>
            <person name="Nakamura Y."/>
            <person name="Nagahari K."/>
            <person name="Murakami K."/>
            <person name="Yasuda T."/>
            <person name="Iwayanagi T."/>
            <person name="Wagatsuma M."/>
            <person name="Shiratori A."/>
            <person name="Sudo H."/>
            <person name="Hosoiri T."/>
            <person name="Kaku Y."/>
            <person name="Kodaira H."/>
            <person name="Kondo H."/>
            <person name="Sugawara M."/>
            <person name="Takahashi M."/>
            <person name="Kanda K."/>
            <person name="Yokoi T."/>
            <person name="Furuya T."/>
            <person name="Kikkawa E."/>
            <person name="Omura Y."/>
            <person name="Abe K."/>
            <person name="Kamihara K."/>
            <person name="Katsuta N."/>
            <person name="Sato K."/>
            <person name="Tanikawa M."/>
            <person name="Yamazaki M."/>
            <person name="Ninomiya K."/>
            <person name="Ishibashi T."/>
            <person name="Yamashita H."/>
            <person name="Murakawa K."/>
            <person name="Fujimori K."/>
            <person name="Tanai H."/>
            <person name="Kimata M."/>
            <person name="Watanabe M."/>
            <person name="Hiraoka S."/>
            <person name="Chiba Y."/>
            <person name="Ishida S."/>
            <person name="Ono Y."/>
            <person name="Takiguchi S."/>
            <person name="Watanabe S."/>
            <person name="Yosida M."/>
            <person name="Hotuta T."/>
            <person name="Kusano J."/>
            <person name="Kanehori K."/>
            <person name="Takahashi-Fujii A."/>
            <person name="Hara H."/>
            <person name="Tanase T.-O."/>
            <person name="Nomura Y."/>
            <person name="Togiya S."/>
            <person name="Komai F."/>
            <person name="Hara R."/>
            <person name="Takeuchi K."/>
            <person name="Arita M."/>
            <person name="Imose N."/>
            <person name="Musashino K."/>
            <person name="Yuuki H."/>
            <person name="Oshima A."/>
            <person name="Sasaki N."/>
            <person name="Aotsuka S."/>
            <person name="Yoshikawa Y."/>
            <person name="Matsunawa H."/>
            <person name="Ichihara T."/>
            <person name="Shiohata N."/>
            <person name="Sano S."/>
            <person name="Moriya S."/>
            <person name="Momiyama H."/>
            <person name="Satoh N."/>
            <person name="Takami S."/>
            <person name="Terashima Y."/>
            <person name="Suzuki O."/>
            <person name="Nakagawa S."/>
            <person name="Senoh A."/>
            <person name="Mizoguchi H."/>
            <person name="Goto Y."/>
            <person name="Shimizu F."/>
            <person name="Wakebe H."/>
            <person name="Hishigaki H."/>
            <person name="Watanabe T."/>
            <person name="Sugiyama A."/>
            <person name="Takemoto M."/>
            <person name="Kawakami B."/>
            <person name="Yamazaki M."/>
            <person name="Watanabe K."/>
            <person name="Kumagai A."/>
            <person name="Itakura S."/>
            <person name="Fukuzumi Y."/>
            <person name="Fujimori Y."/>
            <person name="Komiyama M."/>
            <person name="Tashiro H."/>
            <person name="Tanigami A."/>
            <person name="Fujiwara T."/>
            <person name="Ono T."/>
            <person name="Yamada K."/>
            <person name="Fujii Y."/>
            <person name="Ozaki K."/>
            <person name="Hirao M."/>
            <person name="Ohmori Y."/>
            <person name="Kawabata A."/>
            <person name="Hikiji T."/>
            <person name="Kobatake N."/>
            <person name="Inagaki H."/>
            <person name="Ikema Y."/>
            <person name="Okamoto S."/>
            <person name="Okitani R."/>
            <person name="Kawakami T."/>
            <person name="Noguchi S."/>
            <person name="Itoh T."/>
            <person name="Shigeta K."/>
            <person name="Senba T."/>
            <person name="Matsumura K."/>
            <person name="Nakajima Y."/>
            <person name="Mizuno T."/>
            <person name="Morinaga M."/>
            <person name="Sasaki M."/>
            <person name="Togashi T."/>
            <person name="Oyama M."/>
            <person name="Hata H."/>
            <person name="Watanabe M."/>
            <person name="Komatsu T."/>
            <person name="Mizushima-Sugano J."/>
            <person name="Satoh T."/>
            <person name="Shirai Y."/>
            <person name="Takahashi Y."/>
            <person name="Nakagawa K."/>
            <person name="Okumura K."/>
            <person name="Nagase T."/>
            <person name="Nomura N."/>
            <person name="Kikuchi H."/>
            <person name="Masuho Y."/>
            <person name="Yamashita R."/>
            <person name="Nakai K."/>
            <person name="Yada T."/>
            <person name="Nakamura Y."/>
            <person name="Ohara O."/>
            <person name="Isogai T."/>
            <person name="Sugano S."/>
        </authorList>
    </citation>
    <scope>NUCLEOTIDE SEQUENCE [LARGE SCALE MRNA] (ISOFORM 4)</scope>
</reference>
<reference key="6">
    <citation type="journal article" date="2006" name="Nature">
        <title>Human chromosome 11 DNA sequence and analysis including novel gene identification.</title>
        <authorList>
            <person name="Taylor T.D."/>
            <person name="Noguchi H."/>
            <person name="Totoki Y."/>
            <person name="Toyoda A."/>
            <person name="Kuroki Y."/>
            <person name="Dewar K."/>
            <person name="Lloyd C."/>
            <person name="Itoh T."/>
            <person name="Takeda T."/>
            <person name="Kim D.-W."/>
            <person name="She X."/>
            <person name="Barlow K.F."/>
            <person name="Bloom T."/>
            <person name="Bruford E."/>
            <person name="Chang J.L."/>
            <person name="Cuomo C.A."/>
            <person name="Eichler E."/>
            <person name="FitzGerald M.G."/>
            <person name="Jaffe D.B."/>
            <person name="LaButti K."/>
            <person name="Nicol R."/>
            <person name="Park H.-S."/>
            <person name="Seaman C."/>
            <person name="Sougnez C."/>
            <person name="Yang X."/>
            <person name="Zimmer A.R."/>
            <person name="Zody M.C."/>
            <person name="Birren B.W."/>
            <person name="Nusbaum C."/>
            <person name="Fujiyama A."/>
            <person name="Hattori M."/>
            <person name="Rogers J."/>
            <person name="Lander E.S."/>
            <person name="Sakaki Y."/>
        </authorList>
    </citation>
    <scope>NUCLEOTIDE SEQUENCE [LARGE SCALE GENOMIC DNA]</scope>
</reference>
<reference key="7">
    <citation type="submission" date="2005-07" db="EMBL/GenBank/DDBJ databases">
        <authorList>
            <person name="Mural R.J."/>
            <person name="Istrail S."/>
            <person name="Sutton G.G."/>
            <person name="Florea L."/>
            <person name="Halpern A.L."/>
            <person name="Mobarry C.M."/>
            <person name="Lippert R."/>
            <person name="Walenz B."/>
            <person name="Shatkay H."/>
            <person name="Dew I."/>
            <person name="Miller J.R."/>
            <person name="Flanigan M.J."/>
            <person name="Edwards N.J."/>
            <person name="Bolanos R."/>
            <person name="Fasulo D."/>
            <person name="Halldorsson B.V."/>
            <person name="Hannenhalli S."/>
            <person name="Turner R."/>
            <person name="Yooseph S."/>
            <person name="Lu F."/>
            <person name="Nusskern D.R."/>
            <person name="Shue B.C."/>
            <person name="Zheng X.H."/>
            <person name="Zhong F."/>
            <person name="Delcher A.L."/>
            <person name="Huson D.H."/>
            <person name="Kravitz S.A."/>
            <person name="Mouchard L."/>
            <person name="Reinert K."/>
            <person name="Remington K.A."/>
            <person name="Clark A.G."/>
            <person name="Waterman M.S."/>
            <person name="Eichler E.E."/>
            <person name="Adams M.D."/>
            <person name="Hunkapiller M.W."/>
            <person name="Myers E.W."/>
            <person name="Venter J.C."/>
        </authorList>
    </citation>
    <scope>NUCLEOTIDE SEQUENCE [LARGE SCALE GENOMIC DNA]</scope>
</reference>
<reference key="8">
    <citation type="journal article" date="2004" name="Genome Res.">
        <title>The status, quality, and expansion of the NIH full-length cDNA project: the Mammalian Gene Collection (MGC).</title>
        <authorList>
            <consortium name="The MGC Project Team"/>
        </authorList>
    </citation>
    <scope>NUCLEOTIDE SEQUENCE [LARGE SCALE MRNA] (ISOFORM 1)</scope>
    <source>
        <tissue>Colon</tissue>
    </source>
</reference>
<reference key="9">
    <citation type="journal article" date="2007" name="Rheumatology">
        <title>Molecular analysis of the SLC22A12 (URAT1) gene in patients with primary gout.</title>
        <authorList>
            <person name="Vazquez-Mellado J."/>
            <person name="Jimenez-Vaca A.L."/>
            <person name="Cuevas-Covarrubias S."/>
            <person name="Alvarado-Romano V."/>
            <person name="Pozo-Molina G."/>
            <person name="Burgos-Vargas R."/>
        </authorList>
    </citation>
    <scope>NUCLEOTIDE SEQUENCE [GENOMIC DNA] OF 278-318</scope>
    <scope>VARIANT RHUC1 ASP-298</scope>
    <scope>VARIANTS GLY-284; CYS-290; GLU-297 AND SER-305</scope>
</reference>
<reference key="10">
    <citation type="journal article" date="2003" name="Kidney Int.">
        <title>PDZK1: I. a major scaffolder in brush borders of proximal tubular cells.</title>
        <authorList>
            <person name="Gisler S.M."/>
            <person name="Pribanic S."/>
            <person name="Bacic D."/>
            <person name="Forrer P."/>
            <person name="Gantenbein A."/>
            <person name="Sabourin L.A."/>
            <person name="Tsuji A."/>
            <person name="Zhao Z.-S."/>
            <person name="Manser E."/>
            <person name="Biber J."/>
            <person name="Murer H."/>
        </authorList>
    </citation>
    <scope>INTERACTION WITH PDZK1</scope>
</reference>
<reference key="11">
    <citation type="journal article" date="2004" name="J. Biol. Chem.">
        <title>The multivalent PDZ domain-containing protein PDZK1 regulates transport activity of renal urate-anion exchanger URAT1 via its C terminus.</title>
        <authorList>
            <person name="Anzai N."/>
            <person name="Miyazaki H."/>
            <person name="Noshiro R."/>
            <person name="Khamdang S."/>
            <person name="Chairoungdua A."/>
            <person name="Shin H.J."/>
            <person name="Enomoto A."/>
            <person name="Sakamoto S."/>
            <person name="Hirata T."/>
            <person name="Tomita K."/>
            <person name="Kanai Y."/>
            <person name="Endou H."/>
        </authorList>
    </citation>
    <scope>INTERACTION WITH PDZK1</scope>
    <scope>TISSUE SPECIFICITY</scope>
</reference>
<reference key="12">
    <citation type="journal article" date="2011" name="J. Physiol. Sci.">
        <title>Human urate transporter 1 (hURAT1) mediates the transport of orotate.</title>
        <authorList>
            <person name="Miura D."/>
            <person name="Anzai N."/>
            <person name="Jutabha P."/>
            <person name="Chanluang S."/>
            <person name="He X."/>
            <person name="Fukutomi T."/>
            <person name="Endou H."/>
        </authorList>
    </citation>
    <scope>FUNCTION</scope>
    <scope>TRANSPORTER ACTIVITY</scope>
    <scope>BIOPHYSICOCHEMICAL PROPERTIES</scope>
</reference>
<reference key="13">
    <citation type="journal article" date="2022" name="Drug Metab. Pharmacokinet.">
        <title>Functional characterization of human organic anion transporter 10 (OAT10/SLC22A13) as an orotate transporter.</title>
        <authorList>
            <person name="Shinoda Y."/>
            <person name="Yamashiro T."/>
            <person name="Hosooka A."/>
            <person name="Yasujima T."/>
            <person name="Yuasa H."/>
        </authorList>
    </citation>
    <scope>FUNCTION</scope>
    <scope>SUBCELLULAR LOCATION</scope>
</reference>
<reference key="14">
    <citation type="journal article" date="2022" name="Front. Pharmacol.">
        <title>OAT10/SLC22A13 Acts as a Renal Urate Re-Absorber: Clinico-Genetic and Functional Analyses With Pharmacological Impacts.</title>
        <authorList>
            <person name="Toyoda Y."/>
            <person name="Kawamura Y."/>
            <person name="Nakayama A."/>
            <person name="Morimoto K."/>
            <person name="Shimizu S."/>
            <person name="Tanahashi Y."/>
            <person name="Tamura T."/>
            <person name="Kondo T."/>
            <person name="Kato Y."/>
            <person name="Ichida K."/>
            <person name="Suzuki H."/>
            <person name="Shinomiya N."/>
            <person name="Kobayashi Y."/>
            <person name="Takada T."/>
            <person name="Matsuo H."/>
        </authorList>
    </citation>
    <scope>FUNCTION</scope>
    <scope>SUBCELLULAR LOCATION</scope>
    <scope>GLYCOSYLATION</scope>
</reference>
<reference key="15">
    <citation type="journal article" date="2004" name="J. Am. Soc. Nephrol.">
        <title>Clinical and molecular analysis of patients with renal hypouricemia in Japan-influence of URAT1 gene on urinary urate excretion.</title>
        <authorList>
            <person name="Ichida K."/>
            <person name="Hosoyamada M."/>
            <person name="Hisatome I."/>
            <person name="Enomoto A."/>
            <person name="Hikita M."/>
            <person name="Endou H."/>
            <person name="Hosoya T."/>
        </authorList>
    </citation>
    <scope>VARIANTS RHUC1 HIS-90; MET-138; SER-164; MET-217; LEU-382 AND THR-430</scope>
    <scope>CHARACTERIZATION OF VARIANTS RHUC1 HIS-90; MET-138; SER-164; MET-217; LEU-382 AND THR-430</scope>
</reference>
<reference key="16">
    <citation type="journal article" date="2004" name="Kidney Int.">
        <title>A high prevalence of renal hypouricemia caused by inactive SLC22A12 in Japanese.</title>
        <authorList>
            <person name="Iwai N."/>
            <person name="Mino Y."/>
            <person name="Hosoyamada M."/>
            <person name="Tago N."/>
            <person name="Kokubo Y."/>
            <person name="Endou H."/>
        </authorList>
    </citation>
    <scope>VARIANTS RHUC1 HIS-90; 313-ASP--PRO-333 DEL AND HIS-477</scope>
    <scope>VARIANTS VAL-226 AND LEU-312</scope>
    <scope>CHARACTERIZATION OF VARIANT RHUC1 313-ASP--PRO-333 DEL</scope>
</reference>
<reference key="17">
    <citation type="journal article" date="2005" name="J. Clin. Endocrinol. Metab.">
        <title>Mutations in human urate transporter 1 gene in presecretory reabsorption defect type of familial renal hypouricemia.</title>
        <authorList>
            <person name="Wakida N."/>
            <person name="Tuyen D.G."/>
            <person name="Adachi M."/>
            <person name="Miyoshi T."/>
            <person name="Nonoguchi H."/>
            <person name="Oka T."/>
            <person name="Ueda O."/>
            <person name="Tazawa M."/>
            <person name="Kurihara S."/>
            <person name="Yoneta Y."/>
            <person name="Shimada H."/>
            <person name="Oda T."/>
            <person name="Kikuchi Y."/>
            <person name="Matsuo H."/>
            <person name="Hosoyamada M."/>
            <person name="Endou H."/>
            <person name="Otagiri M."/>
            <person name="Tomita K."/>
            <person name="Kitamura K."/>
        </authorList>
    </citation>
    <scope>VARIANTS RHUC1 LEU-382 AND ARG-418</scope>
    <scope>CHARACTERIZATION OF VARIANTS RHUC1 LEU-382 AND ARG-418</scope>
</reference>
<reference key="18">
    <citation type="journal article" date="2005" name="Pediatr. Nephrol.">
        <title>Mutational analysis of idiopathic renal hypouricemia in Korea.</title>
        <authorList>
            <person name="Cheong H.I."/>
            <person name="Kang J.H."/>
            <person name="Lee J.H."/>
            <person name="Ha I.S."/>
            <person name="Kim S."/>
            <person name="Komoda F."/>
            <person name="Sekine T."/>
            <person name="Igarashi T."/>
            <person name="Choi Y."/>
        </authorList>
    </citation>
    <scope>VARIANTS RHUC1 HIS-90 AND HIS-477</scope>
</reference>
<reference key="19">
    <citation type="journal article" date="2006" name="Arthritis Rheum.">
        <title>Association of the human urate transporter 1 with reduced renal uric acid excretion and hyperuricemia in a German Caucasian population.</title>
        <authorList>
            <person name="Graessler J."/>
            <person name="Graessler A."/>
            <person name="Unger S."/>
            <person name="Kopprasch S."/>
            <person name="Tausche A.-K."/>
            <person name="Kuhlisch E."/>
            <person name="Schroeder H.-E."/>
        </authorList>
    </citation>
    <scope>VARIANT CYS-92</scope>
</reference>
<reference key="20">
    <citation type="journal article" date="2011" name="PLoS ONE">
        <title>Clinical and functional characterization of URAT1 variants.</title>
        <authorList>
            <person name="Tasic V."/>
            <person name="Hynes A.M."/>
            <person name="Kitamura K."/>
            <person name="Cheong H.I."/>
            <person name="Lozanovski V.J."/>
            <person name="Gucev Z."/>
            <person name="Jutabha P."/>
            <person name="Anzai N."/>
            <person name="Sayer J.A."/>
        </authorList>
    </citation>
    <scope>VARIANTS RHUC1 THR-75; SER-347; MET-388; CYS-434 AND HIS-434</scope>
    <scope>CHARACTERIZATION OF VARIANTS RHUC1 THR-75; SER-347; MET-388; CYS-434 AND HIS-434</scope>
    <scope>FUNCTION</scope>
    <scope>SUBCELLULAR LOCATION</scope>
</reference>
<reference key="21">
    <citation type="journal article" date="2015" name="Am. J. Med. Sci.">
        <title>Hereditary renal hypouricemia type 1 and autosomal dominant polycystic kidney disease.</title>
        <authorList>
            <person name="Stiburkova B."/>
            <person name="Stekrova J."/>
            <person name="Nakamura M."/>
            <person name="Ichida K."/>
        </authorList>
    </citation>
    <scope>VARIANTS RHUC1 ARG-366 AND HIS-477</scope>
    <scope>CHARACTERIZATION OF VARIANT RHUC1 ARG-366</scope>
</reference>
<gene>
    <name evidence="22" type="primary">SLC22A12</name>
    <name evidence="17" type="synonym">OATL4</name>
    <name evidence="17" type="synonym">URAT1</name>
    <name type="ORF">UNQ6453/PRO34004</name>
</gene>
<sequence length="553" mass="59630">MAFSELLDLVGGLGRFQVLQTMALMVSIMWLCTQSMLENFSAAVPSHRCWAPLLDNSTAQASILGSLSPEALLAISIPPGPNQRPHQCRRFRQPQWQLLDPNATATSWSEADTEPCVDGWVYDRSIFTSTIVAKWNLVCDSHALKPMAQSIYLAGILVGAAACGPASDRFGRRLVLTWSYLQMAVMGTAAAFAPAFPVYCLFRFLLAFAVAGVMMNTGTLLMEWTAARARPLVMTLNSLGFSFGHGLTAAVAYGVRDWTLLQLVVSVPFFLCFLYSWWLAESARWLLTTGRLDWGLQELWRVAAINGKGAVQDTLTPEVLLSAMREELSMGQPPASLGTLLRMPGLRFRTCISTLCWFAFGFTFFGLALDLQALGSNIFLLQMFIGVVDIPAKMGALLLLSHLGRRPTLAASLLLAGLCILANTLVPHEMGALRSALAVLGLGGVGAAFTCITIYSSELFPTVLRMTAVGLGQMAARGGAILGPLVRLLGVHGPWLPLLVYGTVPVLSGLAALLLPETQSLPLPDTIQDVQNQAVKKATHGTLGNSVLKSTQF</sequence>